<feature type="signal peptide" evidence="2">
    <location>
        <begin position="1"/>
        <end position="20"/>
    </location>
</feature>
<feature type="chain" id="PRO_0000424650" description="GPI-anchored hemophore RBT5">
    <location>
        <begin position="21"/>
        <end position="221"/>
    </location>
</feature>
<feature type="propeptide" id="PRO_0000424651" description="Removed in mature form" evidence="2">
    <location>
        <begin position="222"/>
        <end position="241"/>
    </location>
</feature>
<feature type="domain" description="CFEM" evidence="3 19 22">
    <location>
        <begin position="26"/>
        <end position="137"/>
    </location>
</feature>
<feature type="region of interest" description="Disordered" evidence="4">
    <location>
        <begin position="140"/>
        <end position="210"/>
    </location>
</feature>
<feature type="compositionally biased region" description="Low complexity" evidence="4">
    <location>
        <begin position="140"/>
        <end position="154"/>
    </location>
</feature>
<feature type="compositionally biased region" description="Low complexity" evidence="4">
    <location>
        <begin position="163"/>
        <end position="182"/>
    </location>
</feature>
<feature type="compositionally biased region" description="Basic and acidic residues" evidence="4">
    <location>
        <begin position="183"/>
        <end position="199"/>
    </location>
</feature>
<feature type="compositionally biased region" description="Low complexity" evidence="4">
    <location>
        <begin position="200"/>
        <end position="210"/>
    </location>
</feature>
<feature type="binding site" description="axial binding residue" evidence="3 20">
    <location>
        <position position="72"/>
    </location>
    <ligand>
        <name>heme</name>
        <dbReference type="ChEBI" id="CHEBI:30413"/>
    </ligand>
    <ligandPart>
        <name>Fe</name>
        <dbReference type="ChEBI" id="CHEBI:18248"/>
    </ligandPart>
</feature>
<feature type="lipid moiety-binding region" description="GPI-anchor amidated asparagine" evidence="2">
    <location>
        <position position="221"/>
    </location>
</feature>
<feature type="disulfide bond" evidence="3">
    <location>
        <begin position="54"/>
        <end position="94"/>
    </location>
</feature>
<feature type="disulfide bond" evidence="3">
    <location>
        <begin position="58"/>
        <end position="89"/>
    </location>
</feature>
<feature type="disulfide bond" evidence="3">
    <location>
        <begin position="68"/>
        <end position="75"/>
    </location>
</feature>
<feature type="disulfide bond" evidence="3">
    <location>
        <begin position="77"/>
        <end position="110"/>
    </location>
</feature>
<feature type="mutagenesis site" description="Abolishes heme-binding." evidence="19">
    <original>D</original>
    <variation>A</variation>
    <location>
        <position position="72"/>
    </location>
</feature>
<feature type="mutagenesis site" description="Impairs the heme transfer within the CFEM proteins cascade." evidence="20">
    <original>D</original>
    <variation>H</variation>
    <location>
        <position position="72"/>
    </location>
</feature>
<gene>
    <name evidence="21" type="primary">RBT5</name>
    <name type="ordered locus">CAALFM_C400130WA</name>
    <name type="ORF">CaO19.13081</name>
    <name type="ORF">CaO19.5636</name>
</gene>
<evidence type="ECO:0000250" key="1">
    <source>
        <dbReference type="UniProtKB" id="Q5A0X8"/>
    </source>
</evidence>
<evidence type="ECO:0000255" key="2"/>
<evidence type="ECO:0000255" key="3">
    <source>
        <dbReference type="PROSITE-ProRule" id="PRU01356"/>
    </source>
</evidence>
<evidence type="ECO:0000256" key="4">
    <source>
        <dbReference type="SAM" id="MobiDB-lite"/>
    </source>
</evidence>
<evidence type="ECO:0000269" key="5">
    <source>
    </source>
</evidence>
<evidence type="ECO:0000269" key="6">
    <source>
    </source>
</evidence>
<evidence type="ECO:0000269" key="7">
    <source>
    </source>
</evidence>
<evidence type="ECO:0000269" key="8">
    <source>
    </source>
</evidence>
<evidence type="ECO:0000269" key="9">
    <source>
    </source>
</evidence>
<evidence type="ECO:0000269" key="10">
    <source>
    </source>
</evidence>
<evidence type="ECO:0000269" key="11">
    <source>
    </source>
</evidence>
<evidence type="ECO:0000269" key="12">
    <source>
    </source>
</evidence>
<evidence type="ECO:0000269" key="13">
    <source>
    </source>
</evidence>
<evidence type="ECO:0000269" key="14">
    <source>
    </source>
</evidence>
<evidence type="ECO:0000269" key="15">
    <source>
    </source>
</evidence>
<evidence type="ECO:0000269" key="16">
    <source>
    </source>
</evidence>
<evidence type="ECO:0000269" key="17">
    <source>
    </source>
</evidence>
<evidence type="ECO:0000269" key="18">
    <source>
    </source>
</evidence>
<evidence type="ECO:0000269" key="19">
    <source>
    </source>
</evidence>
<evidence type="ECO:0000269" key="20">
    <source>
    </source>
</evidence>
<evidence type="ECO:0000303" key="21">
    <source>
    </source>
</evidence>
<evidence type="ECO:0000303" key="22">
    <source>
    </source>
</evidence>
<evidence type="ECO:0000303" key="23">
    <source>
    </source>
</evidence>
<evidence type="ECO:0000303" key="24">
    <source>
    </source>
</evidence>
<evidence type="ECO:0000305" key="25"/>
<dbReference type="EMBL" id="CP017626">
    <property type="protein sequence ID" value="AOW28806.1"/>
    <property type="molecule type" value="Genomic_DNA"/>
</dbReference>
<dbReference type="RefSeq" id="XP_713317.1">
    <property type="nucleotide sequence ID" value="XM_708224.2"/>
</dbReference>
<dbReference type="SMR" id="Q59UT4"/>
<dbReference type="STRING" id="237561.Q59UT4"/>
<dbReference type="EnsemblFungi" id="C4_00130W_A-T">
    <property type="protein sequence ID" value="C4_00130W_A-T-p1"/>
    <property type="gene ID" value="C4_00130W_A"/>
</dbReference>
<dbReference type="GeneID" id="3645007"/>
<dbReference type="KEGG" id="cal:CAALFM_C400130WA"/>
<dbReference type="CGD" id="CAL0000195131">
    <property type="gene designation" value="RBT5"/>
</dbReference>
<dbReference type="VEuPathDB" id="FungiDB:C4_00130W_A"/>
<dbReference type="eggNOG" id="ENOG502SFDE">
    <property type="taxonomic scope" value="Eukaryota"/>
</dbReference>
<dbReference type="HOGENOM" id="CLU_079397_0_0_1"/>
<dbReference type="InParanoid" id="Q59UT4"/>
<dbReference type="OMA" id="DVACCIA"/>
<dbReference type="OrthoDB" id="4023956at2759"/>
<dbReference type="PRO" id="PR:Q59UT4"/>
<dbReference type="Proteomes" id="UP000000559">
    <property type="component" value="Chromosome 4"/>
</dbReference>
<dbReference type="GO" id="GO:0005576">
    <property type="term" value="C:extracellular region"/>
    <property type="evidence" value="ECO:0000314"/>
    <property type="project" value="CGD"/>
</dbReference>
<dbReference type="GO" id="GO:0009277">
    <property type="term" value="C:fungal-type cell wall"/>
    <property type="evidence" value="ECO:0000314"/>
    <property type="project" value="CGD"/>
</dbReference>
<dbReference type="GO" id="GO:0005886">
    <property type="term" value="C:plasma membrane"/>
    <property type="evidence" value="ECO:0000314"/>
    <property type="project" value="CGD"/>
</dbReference>
<dbReference type="GO" id="GO:0098552">
    <property type="term" value="C:side of membrane"/>
    <property type="evidence" value="ECO:0007669"/>
    <property type="project" value="UniProtKB-KW"/>
</dbReference>
<dbReference type="GO" id="GO:0030445">
    <property type="term" value="C:yeast-form cell wall"/>
    <property type="evidence" value="ECO:0000314"/>
    <property type="project" value="CGD"/>
</dbReference>
<dbReference type="GO" id="GO:0020037">
    <property type="term" value="F:heme binding"/>
    <property type="evidence" value="ECO:0000314"/>
    <property type="project" value="CGD"/>
</dbReference>
<dbReference type="GO" id="GO:0046872">
    <property type="term" value="F:metal ion binding"/>
    <property type="evidence" value="ECO:0007669"/>
    <property type="project" value="UniProtKB-KW"/>
</dbReference>
<dbReference type="GO" id="GO:0043709">
    <property type="term" value="P:cell adhesion involved in single-species biofilm formation"/>
    <property type="evidence" value="ECO:0000315"/>
    <property type="project" value="CGD"/>
</dbReference>
<dbReference type="GO" id="GO:0020028">
    <property type="term" value="P:endocytic hemoglobin import into cell"/>
    <property type="evidence" value="ECO:0000315"/>
    <property type="project" value="CGD"/>
</dbReference>
<dbReference type="GO" id="GO:0006879">
    <property type="term" value="P:intracellular iron ion homeostasis"/>
    <property type="evidence" value="ECO:0000315"/>
    <property type="project" value="CGD"/>
</dbReference>
<dbReference type="GO" id="GO:0044011">
    <property type="term" value="P:single-species biofilm formation on inanimate substrate"/>
    <property type="evidence" value="ECO:0000315"/>
    <property type="project" value="CGD"/>
</dbReference>
<dbReference type="InterPro" id="IPR051735">
    <property type="entry name" value="CFEM_domain"/>
</dbReference>
<dbReference type="InterPro" id="IPR008427">
    <property type="entry name" value="Extracellular_membr_CFEM_dom"/>
</dbReference>
<dbReference type="PANTHER" id="PTHR37928">
    <property type="entry name" value="CFEM DOMAIN PROTEIN (AFU_ORTHOLOGUE AFUA_6G14090)"/>
    <property type="match status" value="1"/>
</dbReference>
<dbReference type="PANTHER" id="PTHR37928:SF2">
    <property type="entry name" value="GPI ANCHORED CFEM DOMAIN PROTEIN (AFU_ORTHOLOGUE AFUA_6G10580)"/>
    <property type="match status" value="1"/>
</dbReference>
<dbReference type="Pfam" id="PF05730">
    <property type="entry name" value="CFEM"/>
    <property type="match status" value="1"/>
</dbReference>
<dbReference type="SMART" id="SM00747">
    <property type="entry name" value="CFEM"/>
    <property type="match status" value="1"/>
</dbReference>
<dbReference type="PROSITE" id="PS52012">
    <property type="entry name" value="CFEM"/>
    <property type="match status" value="1"/>
</dbReference>
<comment type="function">
    <text evidence="7 13 15 17 19 20">GPI-linked hyphal surface heme-binding protein involved in heme-iron utilization (PubMed:15306022, PubMed:17042757, PubMed:18466294, PubMed:21205162, PubMed:25275454, PubMed:27617569). Heme transfer occurs between PGA7, RBT5 and CSA2 supporting a model in which the 3 CFEM proteins cooperate in a heme-acquisition system and form a cross-cell wall heme-transfer cascade (PubMed:15306022, PubMed:17042757, PubMed:18466294, PubMed:21205162, PubMed:25275454, PubMed:27617569). The ability to acquire iron from host tissues is a major virulence factor of pathogenic microorganisms. Required for biofilm formation (PubMed:15306022, PubMed:17042757, PubMed:18466294, PubMed:21205162, PubMed:25275454).</text>
</comment>
<comment type="subunit">
    <text evidence="19">Interacts with PGA7.</text>
</comment>
<comment type="subcellular location">
    <subcellularLocation>
        <location evidence="14 15 19">Secreted</location>
        <location evidence="14 15 19">Cell wall</location>
    </subcellularLocation>
    <subcellularLocation>
        <location evidence="7 15">Cell membrane</location>
        <topology evidence="23">Lipid-anchor</topology>
        <topology evidence="23">GPI-anchor</topology>
    </subcellularLocation>
    <text evidence="15">Found anchored in the cell membrane as well as a covalently-linked GPI-modified cell wall protein (GPI-CWP).</text>
</comment>
<comment type="induction">
    <text evidence="5 7 8 9 10 11 12 14 16 17 18">Induced by iron starvation, hypoxia, amphotericin B, and during hyphal growth. Repressed by ketoconazole and caspofungin. Regulated by BCR1, HOG1, SFU1, TUP1, and UPC2.</text>
</comment>
<comment type="domain">
    <text evidence="1 6 18 19">The CFEM domain is involved in heme-binding and contains 8 cysteines and is found in proteins from several pathogenic fungi, including both human and plant pathogens (PubMed:12633989, PubMed:22145027, PubMed:25275454). The CFEM domain adopts a novel helical-basket fold that consists of six alpha-helices, and is uniquely stabilized by four disulfide bonds formed by its 8 signature cysteines (By similarity).</text>
</comment>
<comment type="PTM">
    <text evidence="25">The GPI-anchor is attached to the protein in the endoplasmic reticulum and serves to target the protein to the cell surface. There, the glucosamine-inositol phospholipid moiety is cleaved off and the GPI-modified mannoprotein is covalently attached via its lipidless GPI glycan remnant to the 1,6-beta-glucan of the outer cell wall layer.</text>
</comment>
<comment type="PTM">
    <text evidence="7">Mannosylated.</text>
</comment>
<comment type="disruption phenotype">
    <text evidence="7 19 20">Leads to defects in hemin and hemoglobin utilization as sole source of iron.</text>
</comment>
<comment type="similarity">
    <text evidence="25">Belongs to the RBT5 family.</text>
</comment>
<keyword id="KW-1003">Cell membrane</keyword>
<keyword id="KW-0134">Cell wall</keyword>
<keyword id="KW-1015">Disulfide bond</keyword>
<keyword id="KW-0325">Glycoprotein</keyword>
<keyword id="KW-0336">GPI-anchor</keyword>
<keyword id="KW-0349">Heme</keyword>
<keyword id="KW-0408">Iron</keyword>
<keyword id="KW-0449">Lipoprotein</keyword>
<keyword id="KW-0472">Membrane</keyword>
<keyword id="KW-0479">Metal-binding</keyword>
<keyword id="KW-1185">Reference proteome</keyword>
<keyword id="KW-0964">Secreted</keyword>
<keyword id="KW-0732">Signal</keyword>
<sequence length="241" mass="24173">MLALSLLSIVSIASAAGVTAIPEGDNPYTIFPSVAKTASINGFADRIYDQLPECAKECVKQSTSSTPCPYWDTGCLCVMPQFAGAVGNCVAKNCKGKEVGSVESLATSICSSAGVWEPYWMIPSSVSDALAKAADAAAETTAESTTAESTAAETTKAEETSAKETTAAETSKAAESSAPAETSKAEETSKAAETTKAEESSVAQSSSSAADVASVSVEAANAGNMPAVAIGGVIAAVAALF</sequence>
<proteinExistence type="evidence at protein level"/>
<accession>Q59UT4</accession>
<accession>A0A1D8PKY3</accession>
<accession>Q9HFZ1</accession>
<reference key="1">
    <citation type="journal article" date="2004" name="Proc. Natl. Acad. Sci. U.S.A.">
        <title>The diploid genome sequence of Candida albicans.</title>
        <authorList>
            <person name="Jones T."/>
            <person name="Federspiel N.A."/>
            <person name="Chibana H."/>
            <person name="Dungan J."/>
            <person name="Kalman S."/>
            <person name="Magee B.B."/>
            <person name="Newport G."/>
            <person name="Thorstenson Y.R."/>
            <person name="Agabian N."/>
            <person name="Magee P.T."/>
            <person name="Davis R.W."/>
            <person name="Scherer S."/>
        </authorList>
    </citation>
    <scope>NUCLEOTIDE SEQUENCE [LARGE SCALE GENOMIC DNA]</scope>
    <source>
        <strain>SC5314 / ATCC MYA-2876</strain>
    </source>
</reference>
<reference key="2">
    <citation type="journal article" date="2007" name="Genome Biol.">
        <title>Assembly of the Candida albicans genome into sixteen supercontigs aligned on the eight chromosomes.</title>
        <authorList>
            <person name="van het Hoog M."/>
            <person name="Rast T.J."/>
            <person name="Martchenko M."/>
            <person name="Grindle S."/>
            <person name="Dignard D."/>
            <person name="Hogues H."/>
            <person name="Cuomo C."/>
            <person name="Berriman M."/>
            <person name="Scherer S."/>
            <person name="Magee B.B."/>
            <person name="Whiteway M."/>
            <person name="Chibana H."/>
            <person name="Nantel A."/>
            <person name="Magee P.T."/>
        </authorList>
    </citation>
    <scope>GENOME REANNOTATION</scope>
    <source>
        <strain>SC5314 / ATCC MYA-2876</strain>
    </source>
</reference>
<reference key="3">
    <citation type="journal article" date="2013" name="Genome Biol.">
        <title>Assembly of a phased diploid Candida albicans genome facilitates allele-specific measurements and provides a simple model for repeat and indel structure.</title>
        <authorList>
            <person name="Muzzey D."/>
            <person name="Schwartz K."/>
            <person name="Weissman J.S."/>
            <person name="Sherlock G."/>
        </authorList>
    </citation>
    <scope>NUCLEOTIDE SEQUENCE [LARGE SCALE GENOMIC DNA]</scope>
    <scope>GENOME REANNOTATION</scope>
    <source>
        <strain>SC5314 / ATCC MYA-2876</strain>
    </source>
</reference>
<reference key="4">
    <citation type="journal article" date="2000" name="Genetics">
        <title>Identification and characterization of TUP1-regulated genes in Candida albicans.</title>
        <authorList>
            <person name="Braun B.R."/>
            <person name="Head W.S."/>
            <person name="Wang M.X."/>
            <person name="Johnson A.D."/>
        </authorList>
    </citation>
    <scope>INDUCTION</scope>
</reference>
<reference key="5">
    <citation type="journal article" date="2003" name="Trends Biochem. Sci.">
        <title>An eight-cysteine-containing CFEM domain unique to a group of fungal membrane proteins.</title>
        <authorList>
            <person name="Kulkarni R.D."/>
            <person name="Kelkar H.S."/>
            <person name="Dean R.A."/>
        </authorList>
    </citation>
    <scope>DOMAIN</scope>
</reference>
<reference key="6">
    <citation type="journal article" date="2003" name="Yeast">
        <title>Genome-wide identification of fungal GPI proteins.</title>
        <authorList>
            <person name="De Groot P.W."/>
            <person name="Hellingwerf K.J."/>
            <person name="Klis F.M."/>
        </authorList>
    </citation>
    <scope>PREDICTION OF GPI-ANCHOR</scope>
</reference>
<reference key="7">
    <citation type="journal article" date="2004" name="Mol. Microbiol.">
        <title>A family of Candida cell surface haem-binding proteins involved in haemin and haemoglobin-iron utilization.</title>
        <authorList>
            <person name="Weissman Z."/>
            <person name="Kornitzer D."/>
        </authorList>
    </citation>
    <scope>FUNCTION</scope>
    <scope>HEME-BINDING</scope>
    <scope>GLYCOSYLATION</scope>
    <scope>INDUCTION</scope>
    <scope>DISRUPTION PHENOTYPE</scope>
    <scope>SUBCELLULAR LOCATION</scope>
</reference>
<reference key="8">
    <citation type="journal article" date="2004" name="Mol. Microbiol.">
        <title>Transcriptional profiling in Candida albicans reveals new adaptive responses to extracellular pH and functions for Rim101p.</title>
        <authorList>
            <person name="Bensen E.S."/>
            <person name="Martin S.J."/>
            <person name="Li M."/>
            <person name="Berman J."/>
            <person name="Davis D.A."/>
        </authorList>
    </citation>
    <scope>INDUCTION</scope>
</reference>
<reference key="9">
    <citation type="journal article" date="2004" name="Mol. Microbiol.">
        <title>Regulatory networks affected by iron availability in Candida albicans.</title>
        <authorList>
            <person name="Lan C.Y."/>
            <person name="Rodarte G."/>
            <person name="Murillo L.A."/>
            <person name="Jones T."/>
            <person name="Davis R.W."/>
            <person name="Dungan J."/>
            <person name="Newport G."/>
            <person name="Agabian N."/>
        </authorList>
    </citation>
    <scope>INDUCTION</scope>
</reference>
<reference key="10">
    <citation type="journal article" date="2005" name="Antimicrob. Agents Chemother.">
        <title>Genome-wide expression profiling of the response to azole, polyene, echinocandin, and pyrimidine antifungal agents in Candida albicans.</title>
        <authorList>
            <person name="Liu T.T."/>
            <person name="Lee R.E."/>
            <person name="Barker K.S."/>
            <person name="Lee R.E."/>
            <person name="Wei L."/>
            <person name="Homayouni R."/>
            <person name="Rogers P.D."/>
        </authorList>
    </citation>
    <scope>INDUCTION</scope>
</reference>
<reference key="11">
    <citation type="journal article" date="2005" name="J. Antimicrob. Chemother.">
        <title>Genome-wide expression profiling of the response to ciclopirox olamine in Candida albicans.</title>
        <authorList>
            <person name="Lee R.E."/>
            <person name="Liu T.T."/>
            <person name="Barker K.S."/>
            <person name="Lee R.E."/>
            <person name="Rogers P.D."/>
        </authorList>
    </citation>
    <scope>INDUCTION</scope>
</reference>
<reference key="12">
    <citation type="journal article" date="2006" name="FEMS Yeast Res.">
        <title>Biofilm formation by Candida albicans mutants for genes coding fungal proteins exhibiting the eight-cysteine-containing CFEM domain.</title>
        <authorList>
            <person name="Perez A."/>
            <person name="Pedros B."/>
            <person name="Murgui A."/>
            <person name="Casanova M."/>
            <person name="Lopez-Ribot J.L."/>
            <person name="Martinez J.P."/>
        </authorList>
    </citation>
    <scope>FUNCTION</scope>
</reference>
<reference key="13">
    <citation type="journal article" date="2006" name="Mol. Biol. Cell">
        <title>Role of the Hog1 stress-activated protein kinase in the global transcriptional response to stress in the fungal pathogen Candida albicans.</title>
        <authorList>
            <person name="Enjalbert B."/>
            <person name="Smith D.A."/>
            <person name="Cornell M.J."/>
            <person name="Alam I."/>
            <person name="Nicholls S."/>
            <person name="Brown A.J.P."/>
            <person name="Quinn J."/>
        </authorList>
    </citation>
    <scope>INDUCTION</scope>
</reference>
<reference key="14">
    <citation type="journal article" date="2008" name="Microbiology">
        <title>Hypoxic conditions and iron restriction affect the cell-wall proteome of Candida albicans grown under vagina-simulative conditions.</title>
        <authorList>
            <person name="Sosinska G.J."/>
            <person name="de Groot P.W."/>
            <person name="Teixeira de Mattos M.J."/>
            <person name="Dekker H.L."/>
            <person name="de Koster C.G."/>
            <person name="Hellingwerf K.J."/>
            <person name="Klis F.M."/>
        </authorList>
    </citation>
    <scope>IDENTIFICATION BY MASS SPECTROMETRY</scope>
    <scope>SUBCELLULAR LOCATION</scope>
    <scope>INDUCTION</scope>
</reference>
<reference key="15">
    <citation type="journal article" date="2008" name="Mol. Microbiol.">
        <title>An endocytic mechanism for haemoglobin-iron acquisition in Candida albicans.</title>
        <authorList>
            <person name="Weissman Z."/>
            <person name="Shemer R."/>
            <person name="Conibear E."/>
            <person name="Kornitzer D."/>
        </authorList>
    </citation>
    <scope>FUNCTION</scope>
    <scope>SUBCELLULAR LOCATION</scope>
</reference>
<reference key="16">
    <citation type="journal article" date="2010" name="Eukaryot. Cell">
        <title>Regulation of the hypoxic response in Candida albicans.</title>
        <authorList>
            <person name="Synnott J.M."/>
            <person name="Guida A."/>
            <person name="Mulhern-Haughey S."/>
            <person name="Higgins D.G."/>
            <person name="Butler G."/>
        </authorList>
    </citation>
    <scope>INDUCTION</scope>
</reference>
<reference key="17">
    <citation type="journal article" date="2011" name="FEMS Yeast Res.">
        <title>Some biological features of Candida albicans mutants for genes coding fungal proteins containing the CFEM domain.</title>
        <authorList>
            <person name="Perez A."/>
            <person name="Ramage G."/>
            <person name="Blanes R."/>
            <person name="Murgui A."/>
            <person name="Casanova M."/>
            <person name="Martinez J.P."/>
        </authorList>
    </citation>
    <scope>INDUCTION</scope>
    <scope>FUNCTION</scope>
</reference>
<reference key="18">
    <citation type="journal article" date="2011" name="PLoS ONE">
        <title>Conserved and divergent roles of Bcr1 and CFEM proteins in Candida parapsilosis and Candida albicans.</title>
        <authorList>
            <person name="Ding C."/>
            <person name="Vidanes G.M."/>
            <person name="Maguire S.L."/>
            <person name="Guida A."/>
            <person name="Synnott J.M."/>
            <person name="Andes D.R."/>
            <person name="Butler G."/>
        </authorList>
    </citation>
    <scope>INDUCTION</scope>
    <scope>DOMAIN</scope>
</reference>
<reference key="19">
    <citation type="journal article" date="2014" name="PLoS Pathog.">
        <title>A relay network of extracellular heme-binding proteins drives C. albicans iron acquisition from hemoglobin.</title>
        <authorList>
            <person name="Kuznets G."/>
            <person name="Vigonsky E."/>
            <person name="Weissman Z."/>
            <person name="Lalli D."/>
            <person name="Gildor T."/>
            <person name="Kauffman S.J."/>
            <person name="Turano P."/>
            <person name="Becker J."/>
            <person name="Lewinson O."/>
            <person name="Kornitzer D."/>
        </authorList>
    </citation>
    <scope>DISRUPTION PHENOTYPE</scope>
    <scope>FUNCTION</scope>
    <scope>SUBCELLULAR LOCATION</scope>
    <scope>HEME-BINDING</scope>
    <scope>DOMAIN</scope>
    <scope>MUTAGENESIS OF ASP-72</scope>
    <scope>INTERACTION WITH PGA7</scope>
</reference>
<reference key="20">
    <citation type="journal article" date="2016" name="Nat. Microbiol.">
        <title>Structural basis of haem-iron acquisition by fungal pathogens.</title>
        <authorList>
            <person name="Nasser L."/>
            <person name="Weissman Z."/>
            <person name="Pinsky M."/>
            <person name="Amartely H."/>
            <person name="Dvir H."/>
            <person name="Kornitzer D."/>
        </authorList>
    </citation>
    <scope>FUNCTION</scope>
    <scope>DISRUPTION PHENOTYPE</scope>
    <scope>MUTAGENESIS OF ASP-72</scope>
</reference>
<organism>
    <name type="scientific">Candida albicans (strain SC5314 / ATCC MYA-2876)</name>
    <name type="common">Yeast</name>
    <dbReference type="NCBI Taxonomy" id="237561"/>
    <lineage>
        <taxon>Eukaryota</taxon>
        <taxon>Fungi</taxon>
        <taxon>Dikarya</taxon>
        <taxon>Ascomycota</taxon>
        <taxon>Saccharomycotina</taxon>
        <taxon>Pichiomycetes</taxon>
        <taxon>Debaryomycetaceae</taxon>
        <taxon>Candida/Lodderomyces clade</taxon>
        <taxon>Candida</taxon>
    </lineage>
</organism>
<protein>
    <recommendedName>
        <fullName evidence="24">GPI-anchored hemophore RBT5</fullName>
    </recommendedName>
    <alternativeName>
        <fullName evidence="21">Repressed by TUP1 protein 5</fullName>
    </alternativeName>
</protein>
<name>RBT5_CANAL</name>